<protein>
    <recommendedName>
        <fullName evidence="1">Secretion monitor</fullName>
    </recommendedName>
</protein>
<comment type="function">
    <text evidence="1">Regulates secA expression by translational coupling of the secM secA operon. Translational pausing at a specific Pro residue 5 residues before the end of the protein may allow disruption of a mRNA repressor helix that normally suppresses secA translation initiation.</text>
</comment>
<comment type="subcellular location">
    <subcellularLocation>
        <location evidence="1">Cytoplasm</location>
        <location evidence="1">Cytosol</location>
    </subcellularLocation>
    <subcellularLocation>
        <location evidence="1">Periplasm</location>
    </subcellularLocation>
    <text evidence="1">The active form is cytosolic, while the periplasmic form is rapidly degraded, mainly by the tail-specific protease.</text>
</comment>
<comment type="similarity">
    <text evidence="1">Belongs to the SecM family.</text>
</comment>
<comment type="sequence caution" evidence="2">
    <conflict type="erroneous initiation">
        <sequence resource="EMBL-CDS" id="AAN78613"/>
    </conflict>
</comment>
<reference key="1">
    <citation type="journal article" date="2002" name="Proc. Natl. Acad. Sci. U.S.A.">
        <title>Extensive mosaic structure revealed by the complete genome sequence of uropathogenic Escherichia coli.</title>
        <authorList>
            <person name="Welch R.A."/>
            <person name="Burland V."/>
            <person name="Plunkett G. III"/>
            <person name="Redford P."/>
            <person name="Roesch P."/>
            <person name="Rasko D."/>
            <person name="Buckles E.L."/>
            <person name="Liou S.-R."/>
            <person name="Boutin A."/>
            <person name="Hackett J."/>
            <person name="Stroud D."/>
            <person name="Mayhew G.F."/>
            <person name="Rose D.J."/>
            <person name="Zhou S."/>
            <person name="Schwartz D.C."/>
            <person name="Perna N.T."/>
            <person name="Mobley H.L.T."/>
            <person name="Donnenberg M.S."/>
            <person name="Blattner F.R."/>
        </authorList>
    </citation>
    <scope>NUCLEOTIDE SEQUENCE [LARGE SCALE GENOMIC DNA]</scope>
    <source>
        <strain>CFT073 / ATCC 700928 / UPEC</strain>
    </source>
</reference>
<evidence type="ECO:0000255" key="1">
    <source>
        <dbReference type="HAMAP-Rule" id="MF_01332"/>
    </source>
</evidence>
<evidence type="ECO:0000305" key="2"/>
<accession>P62396</accession>
<accession>P58327</accession>
<sequence length="170" mass="18866">MSGILTRWRQFGKRYFWPHLLLGMVAASLGLPALSNAAEPNAPAKATTRNHEPSAKVNFGQLALLEANTRRPNSNYSVDYWHQHAIRTVIRHLSFAMAPQTLPVAEESLPLQAQHLALLDTLSALLTQEGTPSEKGYRIDYAHFTPQAKFSTPVWISQAQGIRAGPQRLS</sequence>
<feature type="signal peptide" evidence="1">
    <location>
        <begin position="1"/>
        <end position="37"/>
    </location>
</feature>
<feature type="chain" id="PRO_0000031990" description="Secretion monitor">
    <location>
        <begin position="38"/>
        <end position="170"/>
    </location>
</feature>
<organism>
    <name type="scientific">Escherichia coli O6:H1 (strain CFT073 / ATCC 700928 / UPEC)</name>
    <dbReference type="NCBI Taxonomy" id="199310"/>
    <lineage>
        <taxon>Bacteria</taxon>
        <taxon>Pseudomonadati</taxon>
        <taxon>Pseudomonadota</taxon>
        <taxon>Gammaproteobacteria</taxon>
        <taxon>Enterobacterales</taxon>
        <taxon>Enterobacteriaceae</taxon>
        <taxon>Escherichia</taxon>
    </lineage>
</organism>
<gene>
    <name evidence="1" type="primary">secM</name>
    <name type="ordered locus">c0115</name>
</gene>
<dbReference type="EMBL" id="AE014075">
    <property type="protein sequence ID" value="AAN78613.1"/>
    <property type="status" value="ALT_INIT"/>
    <property type="molecule type" value="Genomic_DNA"/>
</dbReference>
<dbReference type="RefSeq" id="WP_000014320.1">
    <property type="nucleotide sequence ID" value="NZ_CP051263.1"/>
</dbReference>
<dbReference type="SMR" id="P62396"/>
<dbReference type="STRING" id="199310.c0115"/>
<dbReference type="GeneID" id="75169997"/>
<dbReference type="KEGG" id="ecc:c0115"/>
<dbReference type="eggNOG" id="ENOG5031JGK">
    <property type="taxonomic scope" value="Bacteria"/>
</dbReference>
<dbReference type="HOGENOM" id="CLU_108853_0_0_6"/>
<dbReference type="Proteomes" id="UP000001410">
    <property type="component" value="Chromosome"/>
</dbReference>
<dbReference type="GO" id="GO:0005829">
    <property type="term" value="C:cytosol"/>
    <property type="evidence" value="ECO:0007669"/>
    <property type="project" value="UniProtKB-SubCell"/>
</dbReference>
<dbReference type="GO" id="GO:0042597">
    <property type="term" value="C:periplasmic space"/>
    <property type="evidence" value="ECO:0007669"/>
    <property type="project" value="UniProtKB-SubCell"/>
</dbReference>
<dbReference type="GO" id="GO:0045182">
    <property type="term" value="F:translation regulator activity"/>
    <property type="evidence" value="ECO:0007669"/>
    <property type="project" value="InterPro"/>
</dbReference>
<dbReference type="HAMAP" id="MF_01332">
    <property type="entry name" value="SecM"/>
    <property type="match status" value="1"/>
</dbReference>
<dbReference type="InterPro" id="IPR009502">
    <property type="entry name" value="SecM"/>
</dbReference>
<dbReference type="NCBIfam" id="NF002799">
    <property type="entry name" value="PRK02943.1-1"/>
    <property type="match status" value="1"/>
</dbReference>
<dbReference type="Pfam" id="PF06558">
    <property type="entry name" value="SecM"/>
    <property type="match status" value="1"/>
</dbReference>
<dbReference type="PIRSF" id="PIRSF004572">
    <property type="entry name" value="SecM"/>
    <property type="match status" value="1"/>
</dbReference>
<name>SECM_ECOL6</name>
<proteinExistence type="inferred from homology"/>
<keyword id="KW-0963">Cytoplasm</keyword>
<keyword id="KW-0574">Periplasm</keyword>
<keyword id="KW-1185">Reference proteome</keyword>
<keyword id="KW-0732">Signal</keyword>